<organism>
    <name type="scientific">Mus musculus</name>
    <name type="common">Mouse</name>
    <dbReference type="NCBI Taxonomy" id="10090"/>
    <lineage>
        <taxon>Eukaryota</taxon>
        <taxon>Metazoa</taxon>
        <taxon>Chordata</taxon>
        <taxon>Craniata</taxon>
        <taxon>Vertebrata</taxon>
        <taxon>Euteleostomi</taxon>
        <taxon>Mammalia</taxon>
        <taxon>Eutheria</taxon>
        <taxon>Euarchontoglires</taxon>
        <taxon>Glires</taxon>
        <taxon>Rodentia</taxon>
        <taxon>Myomorpha</taxon>
        <taxon>Muroidea</taxon>
        <taxon>Muridae</taxon>
        <taxon>Murinae</taxon>
        <taxon>Mus</taxon>
        <taxon>Mus</taxon>
    </lineage>
</organism>
<feature type="chain" id="PRO_0000284617" description="Cortexin-2">
    <location>
        <begin position="1"/>
        <end position="81"/>
    </location>
</feature>
<feature type="transmembrane region" description="Helical" evidence="1">
    <location>
        <begin position="29"/>
        <end position="49"/>
    </location>
</feature>
<comment type="subcellular location">
    <subcellularLocation>
        <location evidence="2">Membrane</location>
        <topology evidence="2">Single-pass membrane protein</topology>
    </subcellularLocation>
</comment>
<comment type="similarity">
    <text evidence="2">Belongs to the cortexin family.</text>
</comment>
<comment type="sequence caution" evidence="2">
    <conflict type="erroneous initiation">
        <sequence resource="EMBL-CDS" id="BAE24740"/>
    </conflict>
</comment>
<dbReference type="EMBL" id="AK141570">
    <property type="protein sequence ID" value="BAE24740.1"/>
    <property type="status" value="ALT_INIT"/>
    <property type="molecule type" value="mRNA"/>
</dbReference>
<dbReference type="CCDS" id="CCDS50692.1"/>
<dbReference type="RefSeq" id="NP_001156406.3">
    <property type="nucleotide sequence ID" value="NM_001162934.2"/>
</dbReference>
<dbReference type="RefSeq" id="XP_006499896.1">
    <property type="nucleotide sequence ID" value="XM_006499833.2"/>
</dbReference>
<dbReference type="RefSeq" id="XP_006499897.1">
    <property type="nucleotide sequence ID" value="XM_006499834.3"/>
</dbReference>
<dbReference type="RefSeq" id="XP_006499898.1">
    <property type="nucleotide sequence ID" value="XM_006499835.2"/>
</dbReference>
<dbReference type="SMR" id="Q3URE8"/>
<dbReference type="STRING" id="10090.ENSMUSP00000097051"/>
<dbReference type="PaxDb" id="10090-ENSMUSP00000097051"/>
<dbReference type="Antibodypedia" id="65141">
    <property type="antibodies" value="5 antibodies from 5 providers"/>
</dbReference>
<dbReference type="Ensembl" id="ENSMUST00000238377.2">
    <property type="protein sequence ID" value="ENSMUSP00000158847.2"/>
    <property type="gene ID" value="ENSMUSG00000074872.4"/>
</dbReference>
<dbReference type="Ensembl" id="ENSMUST00000238754.2">
    <property type="protein sequence ID" value="ENSMUSP00000158834.2"/>
    <property type="gene ID" value="ENSMUSG00000074872.4"/>
</dbReference>
<dbReference type="GeneID" id="381418"/>
<dbReference type="KEGG" id="mmu:381418"/>
<dbReference type="UCSC" id="uc008mce.2">
    <property type="organism name" value="mouse"/>
</dbReference>
<dbReference type="AGR" id="MGI:2139444"/>
<dbReference type="CTD" id="399697"/>
<dbReference type="MGI" id="MGI:2139444">
    <property type="gene designation" value="Ctxn2"/>
</dbReference>
<dbReference type="VEuPathDB" id="HostDB:ENSMUSG00000074872"/>
<dbReference type="eggNOG" id="ENOG502S3V3">
    <property type="taxonomic scope" value="Eukaryota"/>
</dbReference>
<dbReference type="GeneTree" id="ENSGT00940000154412"/>
<dbReference type="InParanoid" id="Q3URE8"/>
<dbReference type="OMA" id="GNDIMAH"/>
<dbReference type="OrthoDB" id="9947540at2759"/>
<dbReference type="PhylomeDB" id="Q3URE8"/>
<dbReference type="TreeFam" id="TF333403"/>
<dbReference type="BioGRID-ORCS" id="381418">
    <property type="hits" value="2 hits in 76 CRISPR screens"/>
</dbReference>
<dbReference type="PRO" id="PR:Q3URE8"/>
<dbReference type="Proteomes" id="UP000000589">
    <property type="component" value="Chromosome 2"/>
</dbReference>
<dbReference type="RNAct" id="Q3URE8">
    <property type="molecule type" value="protein"/>
</dbReference>
<dbReference type="Bgee" id="ENSMUSG00000074872">
    <property type="expression patterns" value="Expressed in substantia nigra and 85 other cell types or tissues"/>
</dbReference>
<dbReference type="ExpressionAtlas" id="Q3URE8">
    <property type="expression patterns" value="baseline and differential"/>
</dbReference>
<dbReference type="GO" id="GO:0016020">
    <property type="term" value="C:membrane"/>
    <property type="evidence" value="ECO:0007669"/>
    <property type="project" value="UniProtKB-SubCell"/>
</dbReference>
<dbReference type="InterPro" id="IPR020066">
    <property type="entry name" value="Cortexin"/>
</dbReference>
<dbReference type="PANTHER" id="PTHR16736">
    <property type="entry name" value="CORTEXIN-1-RELATED"/>
    <property type="match status" value="1"/>
</dbReference>
<dbReference type="PANTHER" id="PTHR16736:SF2">
    <property type="entry name" value="CORTEXIN-2"/>
    <property type="match status" value="1"/>
</dbReference>
<dbReference type="Pfam" id="PF11057">
    <property type="entry name" value="Cortexin"/>
    <property type="match status" value="1"/>
</dbReference>
<keyword id="KW-0472">Membrane</keyword>
<keyword id="KW-1185">Reference proteome</keyword>
<keyword id="KW-0812">Transmembrane</keyword>
<keyword id="KW-1133">Transmembrane helix</keyword>
<evidence type="ECO:0000255" key="1"/>
<evidence type="ECO:0000305" key="2"/>
<gene>
    <name type="primary">Ctxn2</name>
</gene>
<proteinExistence type="inferred from homology"/>
<protein>
    <recommendedName>
        <fullName>Cortexin-2</fullName>
    </recommendedName>
</protein>
<sequence length="81" mass="8987">MSSTYCGNSSAKMSVHEVSESSLSLEQKTGFAFVGILCIFLGLLIIRCFKILLDPYSSMPSSTWEDEVEEFDKGTFEYALA</sequence>
<reference key="1">
    <citation type="journal article" date="2005" name="Science">
        <title>The transcriptional landscape of the mammalian genome.</title>
        <authorList>
            <person name="Carninci P."/>
            <person name="Kasukawa T."/>
            <person name="Katayama S."/>
            <person name="Gough J."/>
            <person name="Frith M.C."/>
            <person name="Maeda N."/>
            <person name="Oyama R."/>
            <person name="Ravasi T."/>
            <person name="Lenhard B."/>
            <person name="Wells C."/>
            <person name="Kodzius R."/>
            <person name="Shimokawa K."/>
            <person name="Bajic V.B."/>
            <person name="Brenner S.E."/>
            <person name="Batalov S."/>
            <person name="Forrest A.R."/>
            <person name="Zavolan M."/>
            <person name="Davis M.J."/>
            <person name="Wilming L.G."/>
            <person name="Aidinis V."/>
            <person name="Allen J.E."/>
            <person name="Ambesi-Impiombato A."/>
            <person name="Apweiler R."/>
            <person name="Aturaliya R.N."/>
            <person name="Bailey T.L."/>
            <person name="Bansal M."/>
            <person name="Baxter L."/>
            <person name="Beisel K.W."/>
            <person name="Bersano T."/>
            <person name="Bono H."/>
            <person name="Chalk A.M."/>
            <person name="Chiu K.P."/>
            <person name="Choudhary V."/>
            <person name="Christoffels A."/>
            <person name="Clutterbuck D.R."/>
            <person name="Crowe M.L."/>
            <person name="Dalla E."/>
            <person name="Dalrymple B.P."/>
            <person name="de Bono B."/>
            <person name="Della Gatta G."/>
            <person name="di Bernardo D."/>
            <person name="Down T."/>
            <person name="Engstrom P."/>
            <person name="Fagiolini M."/>
            <person name="Faulkner G."/>
            <person name="Fletcher C.F."/>
            <person name="Fukushima T."/>
            <person name="Furuno M."/>
            <person name="Futaki S."/>
            <person name="Gariboldi M."/>
            <person name="Georgii-Hemming P."/>
            <person name="Gingeras T.R."/>
            <person name="Gojobori T."/>
            <person name="Green R.E."/>
            <person name="Gustincich S."/>
            <person name="Harbers M."/>
            <person name="Hayashi Y."/>
            <person name="Hensch T.K."/>
            <person name="Hirokawa N."/>
            <person name="Hill D."/>
            <person name="Huminiecki L."/>
            <person name="Iacono M."/>
            <person name="Ikeo K."/>
            <person name="Iwama A."/>
            <person name="Ishikawa T."/>
            <person name="Jakt M."/>
            <person name="Kanapin A."/>
            <person name="Katoh M."/>
            <person name="Kawasawa Y."/>
            <person name="Kelso J."/>
            <person name="Kitamura H."/>
            <person name="Kitano H."/>
            <person name="Kollias G."/>
            <person name="Krishnan S.P."/>
            <person name="Kruger A."/>
            <person name="Kummerfeld S.K."/>
            <person name="Kurochkin I.V."/>
            <person name="Lareau L.F."/>
            <person name="Lazarevic D."/>
            <person name="Lipovich L."/>
            <person name="Liu J."/>
            <person name="Liuni S."/>
            <person name="McWilliam S."/>
            <person name="Madan Babu M."/>
            <person name="Madera M."/>
            <person name="Marchionni L."/>
            <person name="Matsuda H."/>
            <person name="Matsuzawa S."/>
            <person name="Miki H."/>
            <person name="Mignone F."/>
            <person name="Miyake S."/>
            <person name="Morris K."/>
            <person name="Mottagui-Tabar S."/>
            <person name="Mulder N."/>
            <person name="Nakano N."/>
            <person name="Nakauchi H."/>
            <person name="Ng P."/>
            <person name="Nilsson R."/>
            <person name="Nishiguchi S."/>
            <person name="Nishikawa S."/>
            <person name="Nori F."/>
            <person name="Ohara O."/>
            <person name="Okazaki Y."/>
            <person name="Orlando V."/>
            <person name="Pang K.C."/>
            <person name="Pavan W.J."/>
            <person name="Pavesi G."/>
            <person name="Pesole G."/>
            <person name="Petrovsky N."/>
            <person name="Piazza S."/>
            <person name="Reed J."/>
            <person name="Reid J.F."/>
            <person name="Ring B.Z."/>
            <person name="Ringwald M."/>
            <person name="Rost B."/>
            <person name="Ruan Y."/>
            <person name="Salzberg S.L."/>
            <person name="Sandelin A."/>
            <person name="Schneider C."/>
            <person name="Schoenbach C."/>
            <person name="Sekiguchi K."/>
            <person name="Semple C.A."/>
            <person name="Seno S."/>
            <person name="Sessa L."/>
            <person name="Sheng Y."/>
            <person name="Shibata Y."/>
            <person name="Shimada H."/>
            <person name="Shimada K."/>
            <person name="Silva D."/>
            <person name="Sinclair B."/>
            <person name="Sperling S."/>
            <person name="Stupka E."/>
            <person name="Sugiura K."/>
            <person name="Sultana R."/>
            <person name="Takenaka Y."/>
            <person name="Taki K."/>
            <person name="Tammoja K."/>
            <person name="Tan S.L."/>
            <person name="Tang S."/>
            <person name="Taylor M.S."/>
            <person name="Tegner J."/>
            <person name="Teichmann S.A."/>
            <person name="Ueda H.R."/>
            <person name="van Nimwegen E."/>
            <person name="Verardo R."/>
            <person name="Wei C.L."/>
            <person name="Yagi K."/>
            <person name="Yamanishi H."/>
            <person name="Zabarovsky E."/>
            <person name="Zhu S."/>
            <person name="Zimmer A."/>
            <person name="Hide W."/>
            <person name="Bult C."/>
            <person name="Grimmond S.M."/>
            <person name="Teasdale R.D."/>
            <person name="Liu E.T."/>
            <person name="Brusic V."/>
            <person name="Quackenbush J."/>
            <person name="Wahlestedt C."/>
            <person name="Mattick J.S."/>
            <person name="Hume D.A."/>
            <person name="Kai C."/>
            <person name="Sasaki D."/>
            <person name="Tomaru Y."/>
            <person name="Fukuda S."/>
            <person name="Kanamori-Katayama M."/>
            <person name="Suzuki M."/>
            <person name="Aoki J."/>
            <person name="Arakawa T."/>
            <person name="Iida J."/>
            <person name="Imamura K."/>
            <person name="Itoh M."/>
            <person name="Kato T."/>
            <person name="Kawaji H."/>
            <person name="Kawagashira N."/>
            <person name="Kawashima T."/>
            <person name="Kojima M."/>
            <person name="Kondo S."/>
            <person name="Konno H."/>
            <person name="Nakano K."/>
            <person name="Ninomiya N."/>
            <person name="Nishio T."/>
            <person name="Okada M."/>
            <person name="Plessy C."/>
            <person name="Shibata K."/>
            <person name="Shiraki T."/>
            <person name="Suzuki S."/>
            <person name="Tagami M."/>
            <person name="Waki K."/>
            <person name="Watahiki A."/>
            <person name="Okamura-Oho Y."/>
            <person name="Suzuki H."/>
            <person name="Kawai J."/>
            <person name="Hayashizaki Y."/>
        </authorList>
    </citation>
    <scope>NUCLEOTIDE SEQUENCE [LARGE SCALE MRNA]</scope>
    <source>
        <strain>C57BL/6J</strain>
        <tissue>Hippocampus</tissue>
    </source>
</reference>
<accession>Q3URE8</accession>
<name>CTXN2_MOUSE</name>